<protein>
    <recommendedName>
        <fullName evidence="2">tRNA (guanine-N(7)-)-methyltransferase</fullName>
        <ecNumber evidence="2">2.1.1.33</ecNumber>
    </recommendedName>
    <alternativeName>
        <fullName evidence="2">tRNA (guanine(46)-N(7))-methyltransferase</fullName>
    </alternativeName>
    <alternativeName>
        <fullName evidence="2">tRNA(m7G46)-methyltransferase</fullName>
    </alternativeName>
</protein>
<comment type="function">
    <text evidence="2">Catalyzes the formation of N(7)-methylguanine at position 46 (m7G46) in tRNA.</text>
</comment>
<comment type="catalytic activity">
    <reaction evidence="2">
        <text>guanosine(46) in tRNA + S-adenosyl-L-methionine = N(7)-methylguanosine(46) in tRNA + S-adenosyl-L-homocysteine</text>
        <dbReference type="Rhea" id="RHEA:42708"/>
        <dbReference type="Rhea" id="RHEA-COMP:10188"/>
        <dbReference type="Rhea" id="RHEA-COMP:10189"/>
        <dbReference type="ChEBI" id="CHEBI:57856"/>
        <dbReference type="ChEBI" id="CHEBI:59789"/>
        <dbReference type="ChEBI" id="CHEBI:74269"/>
        <dbReference type="ChEBI" id="CHEBI:74480"/>
        <dbReference type="EC" id="2.1.1.33"/>
    </reaction>
</comment>
<comment type="pathway">
    <text evidence="2">tRNA modification; N(7)-methylguanine-tRNA biosynthesis.</text>
</comment>
<comment type="similarity">
    <text evidence="2">Belongs to the class I-like SAM-binding methyltransferase superfamily. TrmB family.</text>
</comment>
<organism>
    <name type="scientific">Bacillus cereus (strain G9842)</name>
    <dbReference type="NCBI Taxonomy" id="405531"/>
    <lineage>
        <taxon>Bacteria</taxon>
        <taxon>Bacillati</taxon>
        <taxon>Bacillota</taxon>
        <taxon>Bacilli</taxon>
        <taxon>Bacillales</taxon>
        <taxon>Bacillaceae</taxon>
        <taxon>Bacillus</taxon>
        <taxon>Bacillus cereus group</taxon>
    </lineage>
</organism>
<dbReference type="EC" id="2.1.1.33" evidence="2"/>
<dbReference type="EMBL" id="CP001186">
    <property type="protein sequence ID" value="ACK93198.1"/>
    <property type="molecule type" value="Genomic_DNA"/>
</dbReference>
<dbReference type="RefSeq" id="WP_001239383.1">
    <property type="nucleotide sequence ID" value="NC_011772.1"/>
</dbReference>
<dbReference type="SMR" id="B7IKW6"/>
<dbReference type="GeneID" id="72451361"/>
<dbReference type="KEGG" id="bcg:BCG9842_B0425"/>
<dbReference type="HOGENOM" id="CLU_050910_2_1_9"/>
<dbReference type="UniPathway" id="UPA00989"/>
<dbReference type="Proteomes" id="UP000006744">
    <property type="component" value="Chromosome"/>
</dbReference>
<dbReference type="GO" id="GO:0043527">
    <property type="term" value="C:tRNA methyltransferase complex"/>
    <property type="evidence" value="ECO:0007669"/>
    <property type="project" value="TreeGrafter"/>
</dbReference>
<dbReference type="GO" id="GO:0008176">
    <property type="term" value="F:tRNA (guanine(46)-N7)-methyltransferase activity"/>
    <property type="evidence" value="ECO:0007669"/>
    <property type="project" value="UniProtKB-UniRule"/>
</dbReference>
<dbReference type="CDD" id="cd02440">
    <property type="entry name" value="AdoMet_MTases"/>
    <property type="match status" value="1"/>
</dbReference>
<dbReference type="FunFam" id="3.40.50.150:FF:000035">
    <property type="entry name" value="tRNA (guanine-N(7)-)-methyltransferase"/>
    <property type="match status" value="1"/>
</dbReference>
<dbReference type="Gene3D" id="3.40.50.150">
    <property type="entry name" value="Vaccinia Virus protein VP39"/>
    <property type="match status" value="1"/>
</dbReference>
<dbReference type="HAMAP" id="MF_01057">
    <property type="entry name" value="tRNA_methyltr_TrmB"/>
    <property type="match status" value="1"/>
</dbReference>
<dbReference type="InterPro" id="IPR029063">
    <property type="entry name" value="SAM-dependent_MTases_sf"/>
</dbReference>
<dbReference type="InterPro" id="IPR003358">
    <property type="entry name" value="tRNA_(Gua-N-7)_MeTrfase_Trmb"/>
</dbReference>
<dbReference type="InterPro" id="IPR055361">
    <property type="entry name" value="tRNA_methyltr_TrmB_bact"/>
</dbReference>
<dbReference type="NCBIfam" id="NF001080">
    <property type="entry name" value="PRK00121.2-2"/>
    <property type="match status" value="1"/>
</dbReference>
<dbReference type="NCBIfam" id="TIGR00091">
    <property type="entry name" value="tRNA (guanosine(46)-N7)-methyltransferase TrmB"/>
    <property type="match status" value="1"/>
</dbReference>
<dbReference type="PANTHER" id="PTHR23417">
    <property type="entry name" value="3-DEOXY-D-MANNO-OCTULOSONIC-ACID TRANSFERASE/TRNA GUANINE-N 7 - -METHYLTRANSFERASE"/>
    <property type="match status" value="1"/>
</dbReference>
<dbReference type="PANTHER" id="PTHR23417:SF14">
    <property type="entry name" value="PENTACOTRIPEPTIDE-REPEAT REGION OF PRORP DOMAIN-CONTAINING PROTEIN"/>
    <property type="match status" value="1"/>
</dbReference>
<dbReference type="Pfam" id="PF02390">
    <property type="entry name" value="Methyltransf_4"/>
    <property type="match status" value="1"/>
</dbReference>
<dbReference type="SUPFAM" id="SSF53335">
    <property type="entry name" value="S-adenosyl-L-methionine-dependent methyltransferases"/>
    <property type="match status" value="1"/>
</dbReference>
<dbReference type="PROSITE" id="PS51625">
    <property type="entry name" value="SAM_MT_TRMB"/>
    <property type="match status" value="1"/>
</dbReference>
<keyword id="KW-0489">Methyltransferase</keyword>
<keyword id="KW-0949">S-adenosyl-L-methionine</keyword>
<keyword id="KW-0808">Transferase</keyword>
<keyword id="KW-0819">tRNA processing</keyword>
<gene>
    <name evidence="2" type="primary">trmB</name>
    <name type="ordered locus">BCG9842_B0425</name>
</gene>
<reference key="1">
    <citation type="submission" date="2008-10" db="EMBL/GenBank/DDBJ databases">
        <title>Genome sequence of Bacillus cereus G9842.</title>
        <authorList>
            <person name="Dodson R.J."/>
            <person name="Durkin A.S."/>
            <person name="Rosovitz M.J."/>
            <person name="Rasko D.A."/>
            <person name="Hoffmaster A."/>
            <person name="Ravel J."/>
            <person name="Sutton G."/>
        </authorList>
    </citation>
    <scope>NUCLEOTIDE SEQUENCE [LARGE SCALE GENOMIC DNA]</scope>
    <source>
        <strain>G9842</strain>
    </source>
</reference>
<sequence>MRLRHKPYAMDRINEYSHIVIGNPEERAGNWKEVFGNEQPIHIEVGTGRGRFMYDMAKANPHINYIGIEKFTSVVVDALDKLIEEEVPNLKLINKDAEDLTVFFAKGEIDRVYLNFSDPWPKKRHTKRRLTYKTFLRNYEEVLVEGGEIHFKTDNQGLFEYSLMSMAEYGMLLTYLSLDLHNSDFEGNIMTEYEEKFSSKGHRIYRVEAKYRTEPMQ</sequence>
<name>TRMB_BACC2</name>
<proteinExistence type="inferred from homology"/>
<evidence type="ECO:0000250" key="1"/>
<evidence type="ECO:0000255" key="2">
    <source>
        <dbReference type="HAMAP-Rule" id="MF_01057"/>
    </source>
</evidence>
<feature type="chain" id="PRO_1000136339" description="tRNA (guanine-N(7)-)-methyltransferase">
    <location>
        <begin position="1"/>
        <end position="217"/>
    </location>
</feature>
<feature type="active site" evidence="1">
    <location>
        <position position="118"/>
    </location>
</feature>
<feature type="binding site" evidence="2">
    <location>
        <position position="44"/>
    </location>
    <ligand>
        <name>S-adenosyl-L-methionine</name>
        <dbReference type="ChEBI" id="CHEBI:59789"/>
    </ligand>
</feature>
<feature type="binding site" evidence="2">
    <location>
        <position position="69"/>
    </location>
    <ligand>
        <name>S-adenosyl-L-methionine</name>
        <dbReference type="ChEBI" id="CHEBI:59789"/>
    </ligand>
</feature>
<feature type="binding site" evidence="2">
    <location>
        <position position="96"/>
    </location>
    <ligand>
        <name>S-adenosyl-L-methionine</name>
        <dbReference type="ChEBI" id="CHEBI:59789"/>
    </ligand>
</feature>
<feature type="binding site" evidence="2">
    <location>
        <position position="118"/>
    </location>
    <ligand>
        <name>S-adenosyl-L-methionine</name>
        <dbReference type="ChEBI" id="CHEBI:59789"/>
    </ligand>
</feature>
<feature type="binding site" evidence="2">
    <location>
        <position position="122"/>
    </location>
    <ligand>
        <name>substrate</name>
    </ligand>
</feature>
<feature type="binding site" evidence="2">
    <location>
        <position position="154"/>
    </location>
    <ligand>
        <name>substrate</name>
    </ligand>
</feature>
<feature type="binding site" evidence="2">
    <location>
        <begin position="191"/>
        <end position="194"/>
    </location>
    <ligand>
        <name>substrate</name>
    </ligand>
</feature>
<accession>B7IKW6</accession>